<reference key="1">
    <citation type="journal article" date="2009" name="J. Bacteriol.">
        <title>Genome sequences of three Agrobacterium biovars help elucidate the evolution of multichromosome genomes in bacteria.</title>
        <authorList>
            <person name="Slater S.C."/>
            <person name="Goldman B.S."/>
            <person name="Goodner B."/>
            <person name="Setubal J.C."/>
            <person name="Farrand S.K."/>
            <person name="Nester E.W."/>
            <person name="Burr T.J."/>
            <person name="Banta L."/>
            <person name="Dickerman A.W."/>
            <person name="Paulsen I."/>
            <person name="Otten L."/>
            <person name="Suen G."/>
            <person name="Welch R."/>
            <person name="Almeida N.F."/>
            <person name="Arnold F."/>
            <person name="Burton O.T."/>
            <person name="Du Z."/>
            <person name="Ewing A."/>
            <person name="Godsy E."/>
            <person name="Heisel S."/>
            <person name="Houmiel K.L."/>
            <person name="Jhaveri J."/>
            <person name="Lu J."/>
            <person name="Miller N.M."/>
            <person name="Norton S."/>
            <person name="Chen Q."/>
            <person name="Phoolcharoen W."/>
            <person name="Ohlin V."/>
            <person name="Ondrusek D."/>
            <person name="Pride N."/>
            <person name="Stricklin S.L."/>
            <person name="Sun J."/>
            <person name="Wheeler C."/>
            <person name="Wilson L."/>
            <person name="Zhu H."/>
            <person name="Wood D.W."/>
        </authorList>
    </citation>
    <scope>NUCLEOTIDE SEQUENCE [LARGE SCALE GENOMIC DNA]</scope>
    <source>
        <strain>ATCC BAA-846 / DSM 112012 / S4</strain>
    </source>
</reference>
<feature type="chain" id="PRO_1000200070" description="Probable transcriptional regulatory protein Avi_3631">
    <location>
        <begin position="1"/>
        <end position="248"/>
    </location>
</feature>
<keyword id="KW-0963">Cytoplasm</keyword>
<keyword id="KW-0238">DNA-binding</keyword>
<keyword id="KW-1185">Reference proteome</keyword>
<keyword id="KW-0804">Transcription</keyword>
<keyword id="KW-0805">Transcription regulation</keyword>
<accession>B9JRY6</accession>
<comment type="subcellular location">
    <subcellularLocation>
        <location evidence="1">Cytoplasm</location>
    </subcellularLocation>
</comment>
<comment type="similarity">
    <text evidence="1">Belongs to the TACO1 family.</text>
</comment>
<proteinExistence type="inferred from homology"/>
<gene>
    <name type="ordered locus">Avi_3631</name>
</gene>
<sequence length="248" mass="26745">MAGHSQFKNIMHRKGKQDSVRSKMFSKLAREITVAAKAGLPDPTMNARLRLAIQNAKAQSMPKDNIERAVKKASGVDGENYEEVRYEGYGPGGVAVIVEALTDNRNRTASNVRSTFSKAGGALGETGSVSFSFDKVGEITYKASVGDADAVMEAAIEAGAEDVTSDEDGHTIICGFEDMNEVSKALEATLGEAESVKAIWKPQNTVPVDEDKAQSLMKLIETLEDDDDVQNVYSNFEVSEEVMARLSA</sequence>
<evidence type="ECO:0000255" key="1">
    <source>
        <dbReference type="HAMAP-Rule" id="MF_00693"/>
    </source>
</evidence>
<dbReference type="EMBL" id="CP000633">
    <property type="protein sequence ID" value="ACM37614.1"/>
    <property type="molecule type" value="Genomic_DNA"/>
</dbReference>
<dbReference type="RefSeq" id="WP_015917027.1">
    <property type="nucleotide sequence ID" value="NC_011989.1"/>
</dbReference>
<dbReference type="SMR" id="B9JRY6"/>
<dbReference type="STRING" id="311402.Avi_3631"/>
<dbReference type="KEGG" id="avi:Avi_3631"/>
<dbReference type="eggNOG" id="COG0217">
    <property type="taxonomic scope" value="Bacteria"/>
</dbReference>
<dbReference type="HOGENOM" id="CLU_062974_2_2_5"/>
<dbReference type="Proteomes" id="UP000001596">
    <property type="component" value="Chromosome 1"/>
</dbReference>
<dbReference type="GO" id="GO:0005829">
    <property type="term" value="C:cytosol"/>
    <property type="evidence" value="ECO:0007669"/>
    <property type="project" value="TreeGrafter"/>
</dbReference>
<dbReference type="GO" id="GO:0003677">
    <property type="term" value="F:DNA binding"/>
    <property type="evidence" value="ECO:0007669"/>
    <property type="project" value="UniProtKB-UniRule"/>
</dbReference>
<dbReference type="GO" id="GO:0006355">
    <property type="term" value="P:regulation of DNA-templated transcription"/>
    <property type="evidence" value="ECO:0007669"/>
    <property type="project" value="UniProtKB-UniRule"/>
</dbReference>
<dbReference type="FunFam" id="1.10.10.200:FF:000002">
    <property type="entry name" value="Probable transcriptional regulatory protein CLM62_37755"/>
    <property type="match status" value="1"/>
</dbReference>
<dbReference type="Gene3D" id="1.10.10.200">
    <property type="match status" value="1"/>
</dbReference>
<dbReference type="Gene3D" id="3.30.70.980">
    <property type="match status" value="2"/>
</dbReference>
<dbReference type="HAMAP" id="MF_00693">
    <property type="entry name" value="Transcrip_reg_TACO1"/>
    <property type="match status" value="1"/>
</dbReference>
<dbReference type="InterPro" id="IPR017856">
    <property type="entry name" value="Integrase-like_N"/>
</dbReference>
<dbReference type="InterPro" id="IPR048300">
    <property type="entry name" value="TACO1_YebC-like_2nd/3rd_dom"/>
</dbReference>
<dbReference type="InterPro" id="IPR049083">
    <property type="entry name" value="TACO1_YebC_N"/>
</dbReference>
<dbReference type="InterPro" id="IPR002876">
    <property type="entry name" value="Transcrip_reg_TACO1-like"/>
</dbReference>
<dbReference type="InterPro" id="IPR026564">
    <property type="entry name" value="Transcrip_reg_TACO1-like_dom3"/>
</dbReference>
<dbReference type="InterPro" id="IPR029072">
    <property type="entry name" value="YebC-like"/>
</dbReference>
<dbReference type="NCBIfam" id="NF001030">
    <property type="entry name" value="PRK00110.1"/>
    <property type="match status" value="1"/>
</dbReference>
<dbReference type="NCBIfam" id="NF009044">
    <property type="entry name" value="PRK12378.1"/>
    <property type="match status" value="1"/>
</dbReference>
<dbReference type="NCBIfam" id="TIGR01033">
    <property type="entry name" value="YebC/PmpR family DNA-binding transcriptional regulator"/>
    <property type="match status" value="1"/>
</dbReference>
<dbReference type="PANTHER" id="PTHR12532:SF6">
    <property type="entry name" value="TRANSCRIPTIONAL REGULATORY PROTEIN YEBC-RELATED"/>
    <property type="match status" value="1"/>
</dbReference>
<dbReference type="PANTHER" id="PTHR12532">
    <property type="entry name" value="TRANSLATIONAL ACTIVATOR OF CYTOCHROME C OXIDASE 1"/>
    <property type="match status" value="1"/>
</dbReference>
<dbReference type="Pfam" id="PF20772">
    <property type="entry name" value="TACO1_YebC_N"/>
    <property type="match status" value="1"/>
</dbReference>
<dbReference type="Pfam" id="PF01709">
    <property type="entry name" value="Transcrip_reg"/>
    <property type="match status" value="1"/>
</dbReference>
<dbReference type="SUPFAM" id="SSF75625">
    <property type="entry name" value="YebC-like"/>
    <property type="match status" value="1"/>
</dbReference>
<name>Y3631_ALLAM</name>
<organism>
    <name type="scientific">Allorhizobium ampelinum (strain ATCC BAA-846 / DSM 112012 / S4)</name>
    <name type="common">Agrobacterium vitis (strain S4)</name>
    <dbReference type="NCBI Taxonomy" id="311402"/>
    <lineage>
        <taxon>Bacteria</taxon>
        <taxon>Pseudomonadati</taxon>
        <taxon>Pseudomonadota</taxon>
        <taxon>Alphaproteobacteria</taxon>
        <taxon>Hyphomicrobiales</taxon>
        <taxon>Rhizobiaceae</taxon>
        <taxon>Rhizobium/Agrobacterium group</taxon>
        <taxon>Allorhizobium</taxon>
        <taxon>Allorhizobium ampelinum</taxon>
    </lineage>
</organism>
<protein>
    <recommendedName>
        <fullName evidence="1">Probable transcriptional regulatory protein Avi_3631</fullName>
    </recommendedName>
</protein>